<comment type="function">
    <text evidence="1">Confers resistance to chloramphenicol.</text>
</comment>
<comment type="subcellular location">
    <subcellularLocation>
        <location evidence="1">Cell inner membrane</location>
        <topology evidence="1">Multi-pass membrane protein</topology>
    </subcellularLocation>
</comment>
<comment type="similarity">
    <text evidence="1">Belongs to the major facilitator superfamily. DHA1 family. MdtL (TC 2.A.1.2.22) subfamily.</text>
</comment>
<name>MDTL_ECODH</name>
<feature type="chain" id="PRO_1000200816" description="Multidrug resistance protein MdtL">
    <location>
        <begin position="1"/>
        <end position="391"/>
    </location>
</feature>
<feature type="transmembrane region" description="Helical" evidence="1">
    <location>
        <begin position="4"/>
        <end position="24"/>
    </location>
</feature>
<feature type="transmembrane region" description="Helical" evidence="1">
    <location>
        <begin position="42"/>
        <end position="62"/>
    </location>
</feature>
<feature type="transmembrane region" description="Helical" evidence="1">
    <location>
        <begin position="69"/>
        <end position="89"/>
    </location>
</feature>
<feature type="transmembrane region" description="Helical" evidence="1">
    <location>
        <begin position="93"/>
        <end position="113"/>
    </location>
</feature>
<feature type="transmembrane region" description="Helical" evidence="1">
    <location>
        <begin position="131"/>
        <end position="151"/>
    </location>
</feature>
<feature type="transmembrane region" description="Helical" evidence="1">
    <location>
        <begin position="158"/>
        <end position="178"/>
    </location>
</feature>
<feature type="transmembrane region" description="Helical" evidence="1">
    <location>
        <begin position="203"/>
        <end position="222"/>
    </location>
</feature>
<feature type="transmembrane region" description="Helical" evidence="1">
    <location>
        <begin position="245"/>
        <end position="265"/>
    </location>
</feature>
<feature type="transmembrane region" description="Helical" evidence="1">
    <location>
        <begin position="269"/>
        <end position="289"/>
    </location>
</feature>
<feature type="transmembrane region" description="Helical" evidence="1">
    <location>
        <begin position="293"/>
        <end position="313"/>
    </location>
</feature>
<feature type="transmembrane region" description="Helical" evidence="1">
    <location>
        <begin position="331"/>
        <end position="351"/>
    </location>
</feature>
<feature type="transmembrane region" description="Helical" evidence="1">
    <location>
        <begin position="356"/>
        <end position="376"/>
    </location>
</feature>
<dbReference type="EMBL" id="CP000948">
    <property type="protein sequence ID" value="ACB04754.1"/>
    <property type="molecule type" value="Genomic_DNA"/>
</dbReference>
<dbReference type="RefSeq" id="WP_000085982.1">
    <property type="nucleotide sequence ID" value="NC_010473.1"/>
</dbReference>
<dbReference type="SMR" id="B1X9T9"/>
<dbReference type="KEGG" id="ecd:ECDH10B_3897"/>
<dbReference type="HOGENOM" id="CLU_001265_47_1_6"/>
<dbReference type="GO" id="GO:0005886">
    <property type="term" value="C:plasma membrane"/>
    <property type="evidence" value="ECO:0007669"/>
    <property type="project" value="UniProtKB-SubCell"/>
</dbReference>
<dbReference type="GO" id="GO:0022857">
    <property type="term" value="F:transmembrane transporter activity"/>
    <property type="evidence" value="ECO:0007669"/>
    <property type="project" value="UniProtKB-UniRule"/>
</dbReference>
<dbReference type="GO" id="GO:0046677">
    <property type="term" value="P:response to antibiotic"/>
    <property type="evidence" value="ECO:0007669"/>
    <property type="project" value="UniProtKB-KW"/>
</dbReference>
<dbReference type="CDD" id="cd17320">
    <property type="entry name" value="MFS_MdfA_MDR_like"/>
    <property type="match status" value="1"/>
</dbReference>
<dbReference type="FunFam" id="1.20.1720.10:FF:000003">
    <property type="entry name" value="Multidrug resistance protein MdtL"/>
    <property type="match status" value="1"/>
</dbReference>
<dbReference type="Gene3D" id="1.20.1720.10">
    <property type="entry name" value="Multidrug resistance protein D"/>
    <property type="match status" value="1"/>
</dbReference>
<dbReference type="HAMAP" id="MF_01530">
    <property type="entry name" value="MFS_MdtL"/>
    <property type="match status" value="1"/>
</dbReference>
<dbReference type="InterPro" id="IPR011701">
    <property type="entry name" value="MFS"/>
</dbReference>
<dbReference type="InterPro" id="IPR020846">
    <property type="entry name" value="MFS_dom"/>
</dbReference>
<dbReference type="InterPro" id="IPR050189">
    <property type="entry name" value="MFS_Efflux_Transporters"/>
</dbReference>
<dbReference type="InterPro" id="IPR036259">
    <property type="entry name" value="MFS_trans_sf"/>
</dbReference>
<dbReference type="InterPro" id="IPR023697">
    <property type="entry name" value="Multidrug-R_MdtL"/>
</dbReference>
<dbReference type="NCBIfam" id="NF007782">
    <property type="entry name" value="PRK10473.1"/>
    <property type="match status" value="1"/>
</dbReference>
<dbReference type="PANTHER" id="PTHR43124:SF3">
    <property type="entry name" value="CHLORAMPHENICOL EFFLUX PUMP RV0191"/>
    <property type="match status" value="1"/>
</dbReference>
<dbReference type="PANTHER" id="PTHR43124">
    <property type="entry name" value="PURINE EFFLUX PUMP PBUE"/>
    <property type="match status" value="1"/>
</dbReference>
<dbReference type="Pfam" id="PF07690">
    <property type="entry name" value="MFS_1"/>
    <property type="match status" value="1"/>
</dbReference>
<dbReference type="SUPFAM" id="SSF103473">
    <property type="entry name" value="MFS general substrate transporter"/>
    <property type="match status" value="1"/>
</dbReference>
<dbReference type="PROSITE" id="PS50850">
    <property type="entry name" value="MFS"/>
    <property type="match status" value="1"/>
</dbReference>
<sequence>MSRFLICSFALVLLYPAGIDMYLVGLPRIAADLNASEAQLHIAFSVYLAGMAAAMLFAGKVADRSGRKPVAIPGAALFIIASVFCSLAETSTLFLAGRFLQGLGAGCCYVVAFAILRDTLDDRRRAKVLSLLNGITCIIPVLAPVLGHLIMLKFPWQSLFWAMAMMGIAVLMLSLFILKETRPAAPAASDKPRENSESLLNRFFLSRVVITTLSVSVILTFVNTSPVLLMEIMGFERGEYATIMALTAGVSMTVSFSTPFALGIFKPRTLMITSQVLFLAAGITLAVSPSHAVSLFGITLICAGFSVGFGVAMSQALGPFSLRAGVASSTLGIAQVCGSSLWIWLAAVVGIGAWNMLIGILIACSIVSLLLIMFVAPGRPVAAHEEIHHHA</sequence>
<evidence type="ECO:0000255" key="1">
    <source>
        <dbReference type="HAMAP-Rule" id="MF_01530"/>
    </source>
</evidence>
<proteinExistence type="inferred from homology"/>
<keyword id="KW-0046">Antibiotic resistance</keyword>
<keyword id="KW-0997">Cell inner membrane</keyword>
<keyword id="KW-1003">Cell membrane</keyword>
<keyword id="KW-0472">Membrane</keyword>
<keyword id="KW-0812">Transmembrane</keyword>
<keyword id="KW-1133">Transmembrane helix</keyword>
<keyword id="KW-0813">Transport</keyword>
<gene>
    <name evidence="1" type="primary">mdtL</name>
    <name type="ordered locus">ECDH10B_3897</name>
</gene>
<accession>B1X9T9</accession>
<protein>
    <recommendedName>
        <fullName evidence="1">Multidrug resistance protein MdtL</fullName>
    </recommendedName>
</protein>
<reference key="1">
    <citation type="journal article" date="2008" name="J. Bacteriol.">
        <title>The complete genome sequence of Escherichia coli DH10B: insights into the biology of a laboratory workhorse.</title>
        <authorList>
            <person name="Durfee T."/>
            <person name="Nelson R."/>
            <person name="Baldwin S."/>
            <person name="Plunkett G. III"/>
            <person name="Burland V."/>
            <person name="Mau B."/>
            <person name="Petrosino J.F."/>
            <person name="Qin X."/>
            <person name="Muzny D.M."/>
            <person name="Ayele M."/>
            <person name="Gibbs R.A."/>
            <person name="Csorgo B."/>
            <person name="Posfai G."/>
            <person name="Weinstock G.M."/>
            <person name="Blattner F.R."/>
        </authorList>
    </citation>
    <scope>NUCLEOTIDE SEQUENCE [LARGE SCALE GENOMIC DNA]</scope>
    <source>
        <strain>K12 / DH10B</strain>
    </source>
</reference>
<organism>
    <name type="scientific">Escherichia coli (strain K12 / DH10B)</name>
    <dbReference type="NCBI Taxonomy" id="316385"/>
    <lineage>
        <taxon>Bacteria</taxon>
        <taxon>Pseudomonadati</taxon>
        <taxon>Pseudomonadota</taxon>
        <taxon>Gammaproteobacteria</taxon>
        <taxon>Enterobacterales</taxon>
        <taxon>Enterobacteriaceae</taxon>
        <taxon>Escherichia</taxon>
    </lineage>
</organism>